<name>TPC12_MOUSE</name>
<comment type="function">
    <text evidence="1">Component of the TRAPP complex, which is involved in endoplasmic reticulum to Golgi apparatus trafficking at a very early stage. Also plays a role in chromosome congression, kinetochore assembly and stability and controls the recruitment of CENPE to the kinetochores.</text>
</comment>
<comment type="subunit">
    <text evidence="1">Component of the multisubunit TRAPP (transport protein particle) complex, which includes at least TRAPPC2, TRAPPC2L, TRAPPC3, TRAPPC3L, TRAPPC4, TRAPPC5, TRAPPC8, TRAPPC9, TRAPPC10, TRAPPC11 and TRAPPC12. Interacts with CENPE.</text>
</comment>
<comment type="subcellular location">
    <subcellularLocation>
        <location evidence="1">Endoplasmic reticulum-Golgi intermediate compartment</location>
    </subcellularLocation>
    <subcellularLocation>
        <location evidence="1">Nucleus</location>
    </subcellularLocation>
    <text evidence="1">Mainly localizes to structures resembling the Golgi and a small amount is found in the nucleus.</text>
</comment>
<comment type="PTM">
    <text evidence="1">Phosphorylated as the cells enter mitosis but is dephosphorylated at or before the onset of anaphase. The phosphorylated form recruits CENPE to kinetochores more efficiently than the non-phosphorylated form.</text>
</comment>
<comment type="sequence caution" evidence="3">
    <conflict type="erroneous initiation">
        <sequence resource="EMBL-CDS" id="BAC33585"/>
    </conflict>
    <text>Truncated N-terminus.</text>
</comment>
<accession>Q8K2L8</accession>
<accession>E9QLQ6</accession>
<accession>Q8BX27</accession>
<proteinExistence type="evidence at protein level"/>
<keyword id="KW-0931">ER-Golgi transport</keyword>
<keyword id="KW-0539">Nucleus</keyword>
<keyword id="KW-0597">Phosphoprotein</keyword>
<keyword id="KW-1185">Reference proteome</keyword>
<keyword id="KW-0677">Repeat</keyword>
<keyword id="KW-0802">TPR repeat</keyword>
<keyword id="KW-0813">Transport</keyword>
<feature type="chain" id="PRO_0000106402" description="Trafficking protein particle complex subunit 12">
    <location>
        <begin position="1"/>
        <end position="797"/>
    </location>
</feature>
<feature type="repeat" description="TPR 1">
    <location>
        <begin position="607"/>
        <end position="640"/>
    </location>
</feature>
<feature type="repeat" description="TPR 2">
    <location>
        <begin position="642"/>
        <end position="675"/>
    </location>
</feature>
<feature type="repeat" description="TPR 3">
    <location>
        <begin position="682"/>
        <end position="715"/>
    </location>
</feature>
<feature type="repeat" description="TPR 4">
    <location>
        <begin position="716"/>
        <end position="749"/>
    </location>
</feature>
<feature type="region of interest" description="Disordered" evidence="2">
    <location>
        <begin position="1"/>
        <end position="257"/>
    </location>
</feature>
<feature type="region of interest" description="Disordered" evidence="2">
    <location>
        <begin position="286"/>
        <end position="338"/>
    </location>
</feature>
<feature type="compositionally biased region" description="Low complexity" evidence="2">
    <location>
        <begin position="9"/>
        <end position="23"/>
    </location>
</feature>
<feature type="compositionally biased region" description="Basic and acidic residues" evidence="2">
    <location>
        <begin position="29"/>
        <end position="43"/>
    </location>
</feature>
<feature type="compositionally biased region" description="Acidic residues" evidence="2">
    <location>
        <begin position="47"/>
        <end position="58"/>
    </location>
</feature>
<feature type="compositionally biased region" description="Basic and acidic residues" evidence="2">
    <location>
        <begin position="66"/>
        <end position="75"/>
    </location>
</feature>
<feature type="compositionally biased region" description="Basic and acidic residues" evidence="2">
    <location>
        <begin position="107"/>
        <end position="121"/>
    </location>
</feature>
<feature type="compositionally biased region" description="Basic and acidic residues" evidence="2">
    <location>
        <begin position="173"/>
        <end position="185"/>
    </location>
</feature>
<feature type="compositionally biased region" description="Polar residues" evidence="2">
    <location>
        <begin position="206"/>
        <end position="216"/>
    </location>
</feature>
<feature type="compositionally biased region" description="Low complexity" evidence="2">
    <location>
        <begin position="232"/>
        <end position="244"/>
    </location>
</feature>
<feature type="modified residue" description="Phosphoserine" evidence="5 6">
    <location>
        <position position="125"/>
    </location>
</feature>
<feature type="modified residue" description="Phosphoserine" evidence="5 6">
    <location>
        <position position="128"/>
    </location>
</feature>
<feature type="modified residue" description="Phosphothreonine" evidence="5 6">
    <location>
        <position position="130"/>
    </location>
</feature>
<feature type="modified residue" description="Phosphoserine" evidence="1">
    <location>
        <position position="234"/>
    </location>
</feature>
<feature type="modified residue" description="Phosphoserine" evidence="5 6">
    <location>
        <position position="309"/>
    </location>
</feature>
<feature type="modified residue" description="Phosphoserine" evidence="6">
    <location>
        <position position="314"/>
    </location>
</feature>
<feature type="sequence conflict" description="In Ref. 2; AAH24077/AAH30887." evidence="3" ref="2">
    <original>T</original>
    <variation>M</variation>
    <location>
        <position position="241"/>
    </location>
</feature>
<feature type="sequence conflict" description="In Ref. 3; BAC33585." evidence="3" ref="3">
    <original>V</original>
    <variation>I</variation>
    <location>
        <position position="305"/>
    </location>
</feature>
<evidence type="ECO:0000250" key="1">
    <source>
        <dbReference type="UniProtKB" id="Q8WVT3"/>
    </source>
</evidence>
<evidence type="ECO:0000256" key="2">
    <source>
        <dbReference type="SAM" id="MobiDB-lite"/>
    </source>
</evidence>
<evidence type="ECO:0000305" key="3"/>
<evidence type="ECO:0000312" key="4">
    <source>
        <dbReference type="MGI" id="MGI:2445089"/>
    </source>
</evidence>
<evidence type="ECO:0007744" key="5">
    <source>
    </source>
</evidence>
<evidence type="ECO:0007744" key="6">
    <source>
    </source>
</evidence>
<reference key="1">
    <citation type="journal article" date="2009" name="PLoS Biol.">
        <title>Lineage-specific biology revealed by a finished genome assembly of the mouse.</title>
        <authorList>
            <person name="Church D.M."/>
            <person name="Goodstadt L."/>
            <person name="Hillier L.W."/>
            <person name="Zody M.C."/>
            <person name="Goldstein S."/>
            <person name="She X."/>
            <person name="Bult C.J."/>
            <person name="Agarwala R."/>
            <person name="Cherry J.L."/>
            <person name="DiCuccio M."/>
            <person name="Hlavina W."/>
            <person name="Kapustin Y."/>
            <person name="Meric P."/>
            <person name="Maglott D."/>
            <person name="Birtle Z."/>
            <person name="Marques A.C."/>
            <person name="Graves T."/>
            <person name="Zhou S."/>
            <person name="Teague B."/>
            <person name="Potamousis K."/>
            <person name="Churas C."/>
            <person name="Place M."/>
            <person name="Herschleb J."/>
            <person name="Runnheim R."/>
            <person name="Forrest D."/>
            <person name="Amos-Landgraf J."/>
            <person name="Schwartz D.C."/>
            <person name="Cheng Z."/>
            <person name="Lindblad-Toh K."/>
            <person name="Eichler E.E."/>
            <person name="Ponting C.P."/>
        </authorList>
    </citation>
    <scope>NUCLEOTIDE SEQUENCE [LARGE SCALE GENOMIC DNA]</scope>
    <source>
        <strain>C57BL/6J</strain>
    </source>
</reference>
<reference key="2">
    <citation type="journal article" date="2004" name="Genome Res.">
        <title>The status, quality, and expansion of the NIH full-length cDNA project: the Mammalian Gene Collection (MGC).</title>
        <authorList>
            <consortium name="The MGC Project Team"/>
        </authorList>
    </citation>
    <scope>NUCLEOTIDE SEQUENCE [LARGE SCALE MRNA]</scope>
    <source>
        <strain>FVB/N</strain>
        <tissue>Liver</tissue>
    </source>
</reference>
<reference key="3">
    <citation type="journal article" date="2005" name="Science">
        <title>The transcriptional landscape of the mammalian genome.</title>
        <authorList>
            <person name="Carninci P."/>
            <person name="Kasukawa T."/>
            <person name="Katayama S."/>
            <person name="Gough J."/>
            <person name="Frith M.C."/>
            <person name="Maeda N."/>
            <person name="Oyama R."/>
            <person name="Ravasi T."/>
            <person name="Lenhard B."/>
            <person name="Wells C."/>
            <person name="Kodzius R."/>
            <person name="Shimokawa K."/>
            <person name="Bajic V.B."/>
            <person name="Brenner S.E."/>
            <person name="Batalov S."/>
            <person name="Forrest A.R."/>
            <person name="Zavolan M."/>
            <person name="Davis M.J."/>
            <person name="Wilming L.G."/>
            <person name="Aidinis V."/>
            <person name="Allen J.E."/>
            <person name="Ambesi-Impiombato A."/>
            <person name="Apweiler R."/>
            <person name="Aturaliya R.N."/>
            <person name="Bailey T.L."/>
            <person name="Bansal M."/>
            <person name="Baxter L."/>
            <person name="Beisel K.W."/>
            <person name="Bersano T."/>
            <person name="Bono H."/>
            <person name="Chalk A.M."/>
            <person name="Chiu K.P."/>
            <person name="Choudhary V."/>
            <person name="Christoffels A."/>
            <person name="Clutterbuck D.R."/>
            <person name="Crowe M.L."/>
            <person name="Dalla E."/>
            <person name="Dalrymple B.P."/>
            <person name="de Bono B."/>
            <person name="Della Gatta G."/>
            <person name="di Bernardo D."/>
            <person name="Down T."/>
            <person name="Engstrom P."/>
            <person name="Fagiolini M."/>
            <person name="Faulkner G."/>
            <person name="Fletcher C.F."/>
            <person name="Fukushima T."/>
            <person name="Furuno M."/>
            <person name="Futaki S."/>
            <person name="Gariboldi M."/>
            <person name="Georgii-Hemming P."/>
            <person name="Gingeras T.R."/>
            <person name="Gojobori T."/>
            <person name="Green R.E."/>
            <person name="Gustincich S."/>
            <person name="Harbers M."/>
            <person name="Hayashi Y."/>
            <person name="Hensch T.K."/>
            <person name="Hirokawa N."/>
            <person name="Hill D."/>
            <person name="Huminiecki L."/>
            <person name="Iacono M."/>
            <person name="Ikeo K."/>
            <person name="Iwama A."/>
            <person name="Ishikawa T."/>
            <person name="Jakt M."/>
            <person name="Kanapin A."/>
            <person name="Katoh M."/>
            <person name="Kawasawa Y."/>
            <person name="Kelso J."/>
            <person name="Kitamura H."/>
            <person name="Kitano H."/>
            <person name="Kollias G."/>
            <person name="Krishnan S.P."/>
            <person name="Kruger A."/>
            <person name="Kummerfeld S.K."/>
            <person name="Kurochkin I.V."/>
            <person name="Lareau L.F."/>
            <person name="Lazarevic D."/>
            <person name="Lipovich L."/>
            <person name="Liu J."/>
            <person name="Liuni S."/>
            <person name="McWilliam S."/>
            <person name="Madan Babu M."/>
            <person name="Madera M."/>
            <person name="Marchionni L."/>
            <person name="Matsuda H."/>
            <person name="Matsuzawa S."/>
            <person name="Miki H."/>
            <person name="Mignone F."/>
            <person name="Miyake S."/>
            <person name="Morris K."/>
            <person name="Mottagui-Tabar S."/>
            <person name="Mulder N."/>
            <person name="Nakano N."/>
            <person name="Nakauchi H."/>
            <person name="Ng P."/>
            <person name="Nilsson R."/>
            <person name="Nishiguchi S."/>
            <person name="Nishikawa S."/>
            <person name="Nori F."/>
            <person name="Ohara O."/>
            <person name="Okazaki Y."/>
            <person name="Orlando V."/>
            <person name="Pang K.C."/>
            <person name="Pavan W.J."/>
            <person name="Pavesi G."/>
            <person name="Pesole G."/>
            <person name="Petrovsky N."/>
            <person name="Piazza S."/>
            <person name="Reed J."/>
            <person name="Reid J.F."/>
            <person name="Ring B.Z."/>
            <person name="Ringwald M."/>
            <person name="Rost B."/>
            <person name="Ruan Y."/>
            <person name="Salzberg S.L."/>
            <person name="Sandelin A."/>
            <person name="Schneider C."/>
            <person name="Schoenbach C."/>
            <person name="Sekiguchi K."/>
            <person name="Semple C.A."/>
            <person name="Seno S."/>
            <person name="Sessa L."/>
            <person name="Sheng Y."/>
            <person name="Shibata Y."/>
            <person name="Shimada H."/>
            <person name="Shimada K."/>
            <person name="Silva D."/>
            <person name="Sinclair B."/>
            <person name="Sperling S."/>
            <person name="Stupka E."/>
            <person name="Sugiura K."/>
            <person name="Sultana R."/>
            <person name="Takenaka Y."/>
            <person name="Taki K."/>
            <person name="Tammoja K."/>
            <person name="Tan S.L."/>
            <person name="Tang S."/>
            <person name="Taylor M.S."/>
            <person name="Tegner J."/>
            <person name="Teichmann S.A."/>
            <person name="Ueda H.R."/>
            <person name="van Nimwegen E."/>
            <person name="Verardo R."/>
            <person name="Wei C.L."/>
            <person name="Yagi K."/>
            <person name="Yamanishi H."/>
            <person name="Zabarovsky E."/>
            <person name="Zhu S."/>
            <person name="Zimmer A."/>
            <person name="Hide W."/>
            <person name="Bult C."/>
            <person name="Grimmond S.M."/>
            <person name="Teasdale R.D."/>
            <person name="Liu E.T."/>
            <person name="Brusic V."/>
            <person name="Quackenbush J."/>
            <person name="Wahlestedt C."/>
            <person name="Mattick J.S."/>
            <person name="Hume D.A."/>
            <person name="Kai C."/>
            <person name="Sasaki D."/>
            <person name="Tomaru Y."/>
            <person name="Fukuda S."/>
            <person name="Kanamori-Katayama M."/>
            <person name="Suzuki M."/>
            <person name="Aoki J."/>
            <person name="Arakawa T."/>
            <person name="Iida J."/>
            <person name="Imamura K."/>
            <person name="Itoh M."/>
            <person name="Kato T."/>
            <person name="Kawaji H."/>
            <person name="Kawagashira N."/>
            <person name="Kawashima T."/>
            <person name="Kojima M."/>
            <person name="Kondo S."/>
            <person name="Konno H."/>
            <person name="Nakano K."/>
            <person name="Ninomiya N."/>
            <person name="Nishio T."/>
            <person name="Okada M."/>
            <person name="Plessy C."/>
            <person name="Shibata K."/>
            <person name="Shiraki T."/>
            <person name="Suzuki S."/>
            <person name="Tagami M."/>
            <person name="Waki K."/>
            <person name="Watahiki A."/>
            <person name="Okamura-Oho Y."/>
            <person name="Suzuki H."/>
            <person name="Kawai J."/>
            <person name="Hayashizaki Y."/>
        </authorList>
    </citation>
    <scope>NUCLEOTIDE SEQUENCE [LARGE SCALE MRNA] OF 224-797</scope>
    <source>
        <strain>C57BL/6J</strain>
    </source>
</reference>
<reference key="4">
    <citation type="journal article" date="2007" name="Proc. Natl. Acad. Sci. U.S.A.">
        <title>Large-scale phosphorylation analysis of mouse liver.</title>
        <authorList>
            <person name="Villen J."/>
            <person name="Beausoleil S.A."/>
            <person name="Gerber S.A."/>
            <person name="Gygi S.P."/>
        </authorList>
    </citation>
    <scope>PHOSPHORYLATION [LARGE SCALE ANALYSIS] AT SER-125; SER-128; THR-130 AND SER-309</scope>
    <scope>IDENTIFICATION BY MASS SPECTROMETRY [LARGE SCALE ANALYSIS]</scope>
    <source>
        <tissue>Liver</tissue>
    </source>
</reference>
<reference key="5">
    <citation type="journal article" date="2010" name="Cell">
        <title>A tissue-specific atlas of mouse protein phosphorylation and expression.</title>
        <authorList>
            <person name="Huttlin E.L."/>
            <person name="Jedrychowski M.P."/>
            <person name="Elias J.E."/>
            <person name="Goswami T."/>
            <person name="Rad R."/>
            <person name="Beausoleil S.A."/>
            <person name="Villen J."/>
            <person name="Haas W."/>
            <person name="Sowa M.E."/>
            <person name="Gygi S.P."/>
        </authorList>
    </citation>
    <scope>PHOSPHORYLATION [LARGE SCALE ANALYSIS] AT SER-125; SER-128; THR-130; SER-309 AND SER-314</scope>
    <scope>IDENTIFICATION BY MASS SPECTROMETRY [LARGE SCALE ANALYSIS]</scope>
    <source>
        <tissue>Brain</tissue>
        <tissue>Brown adipose tissue</tissue>
        <tissue>Heart</tissue>
        <tissue>Kidney</tissue>
        <tissue>Liver</tissue>
        <tissue>Lung</tissue>
        <tissue>Spleen</tissue>
        <tissue>Testis</tissue>
    </source>
</reference>
<sequence length="797" mass="87694">METAKDGEQSPSEASPSAQAGPENIPEPMSREEESQPLYHEETIDLGGDEFASEENEPTSEGSHNFGDKLNEHMMESVLISDSPNNSEGDVGDLGCLQDVGEPPRGATDHRLPSSTDKEVVDTLSNGSETDGDDTPRDISDMTPDSRASLKEDSTQEDVTSMPALENAATEEVGPKDSLAPREEQTSEVSSNQSSSKDEPLPVCTIFSQATATPSQPHLFLQDGFESQMVKSPSFSSTSETSAKTPPPMVQPSPSLSTFFGDTMSSNSLASDFFDSFTTSTFISVSNPNAGSPVPEKLSSLTAPVGEKSPDSTSPSYSTRMDRSESGVSRAPLDVPESPKPFSQIQAVFAGSDDPFATALSMSEMDRRNDAWLPSQATREVLMSVATQQYGTVFIDKENLTMPGLKFDNIQGDAVKDLMLRFLGEKAAAKRQVLNASSVEQSFVGLKQLISCRNWRAAVDLCGRLLTAHGQGYGKNGLPTSHTTDSLQLWFVRLALLVKLGLFQNAEMEFEPFGNLDQPDLYYEYYPHVYPGRRGSMVPFSMRILHAELQQYLGNPQESLDRLHRVKTVCSKILANLEQGLAEDGGLSSVTQESRQASVQLWRSRLGRVLYSMANCLLLMKDYVLAVDAYLTVIKYYPEQEPQLLSGIGRILLQIGDIKTAEKYFQDVEKVTQKLDGLQGKIMVLMNRAFLYLGQNNFAEAHKFFTEILRMDPTNAVANNNAAVCLLYLGKLKDSLRQLEAMVQQDPRHYLHESVLFNLTTMYELESSRSMQKKQSLLEAVASKEGDSFNTQCLKLA</sequence>
<gene>
    <name evidence="4" type="primary">Trappc12</name>
    <name evidence="1" type="synonym">Ttc15</name>
</gene>
<protein>
    <recommendedName>
        <fullName evidence="3">Trafficking protein particle complex subunit 12</fullName>
    </recommendedName>
    <alternativeName>
        <fullName evidence="1">Tetratricopeptide repeat protein 15</fullName>
        <shortName evidence="1">TPR repeat protein 15</shortName>
    </alternativeName>
</protein>
<organism>
    <name type="scientific">Mus musculus</name>
    <name type="common">Mouse</name>
    <dbReference type="NCBI Taxonomy" id="10090"/>
    <lineage>
        <taxon>Eukaryota</taxon>
        <taxon>Metazoa</taxon>
        <taxon>Chordata</taxon>
        <taxon>Craniata</taxon>
        <taxon>Vertebrata</taxon>
        <taxon>Euteleostomi</taxon>
        <taxon>Mammalia</taxon>
        <taxon>Eutheria</taxon>
        <taxon>Euarchontoglires</taxon>
        <taxon>Glires</taxon>
        <taxon>Rodentia</taxon>
        <taxon>Myomorpha</taxon>
        <taxon>Muroidea</taxon>
        <taxon>Muridae</taxon>
        <taxon>Murinae</taxon>
        <taxon>Mus</taxon>
        <taxon>Mus</taxon>
    </lineage>
</organism>
<dbReference type="EMBL" id="AC136986">
    <property type="status" value="NOT_ANNOTATED_CDS"/>
    <property type="molecule type" value="Genomic_DNA"/>
</dbReference>
<dbReference type="EMBL" id="BC024077">
    <property type="protein sequence ID" value="AAH24077.1"/>
    <property type="molecule type" value="mRNA"/>
</dbReference>
<dbReference type="EMBL" id="BC030887">
    <property type="protein sequence ID" value="AAH30887.1"/>
    <property type="molecule type" value="mRNA"/>
</dbReference>
<dbReference type="EMBL" id="AK049172">
    <property type="protein sequence ID" value="BAC33585.1"/>
    <property type="status" value="ALT_INIT"/>
    <property type="molecule type" value="mRNA"/>
</dbReference>
<dbReference type="CCDS" id="CCDS25854.1"/>
<dbReference type="RefSeq" id="NP_001154882.1">
    <property type="nucleotide sequence ID" value="NM_001161410.2"/>
</dbReference>
<dbReference type="RefSeq" id="NP_001363936.1">
    <property type="nucleotide sequence ID" value="NM_001377007.1"/>
</dbReference>
<dbReference type="RefSeq" id="NP_848926.3">
    <property type="nucleotide sequence ID" value="NM_178811.4"/>
</dbReference>
<dbReference type="SMR" id="Q8K2L8"/>
<dbReference type="BioGRID" id="229916">
    <property type="interactions" value="14"/>
</dbReference>
<dbReference type="ComplexPortal" id="CPX-4766">
    <property type="entry name" value="TRAPP III complex"/>
</dbReference>
<dbReference type="FunCoup" id="Q8K2L8">
    <property type="interactions" value="3637"/>
</dbReference>
<dbReference type="STRING" id="10090.ENSMUSP00000020954"/>
<dbReference type="GlyGen" id="Q8K2L8">
    <property type="glycosylation" value="3 sites, 2 N-linked glycans (2 sites)"/>
</dbReference>
<dbReference type="iPTMnet" id="Q8K2L8"/>
<dbReference type="PhosphoSitePlus" id="Q8K2L8"/>
<dbReference type="SwissPalm" id="Q8K2L8"/>
<dbReference type="jPOST" id="Q8K2L8"/>
<dbReference type="PaxDb" id="10090-ENSMUSP00000020954"/>
<dbReference type="PeptideAtlas" id="Q8K2L8"/>
<dbReference type="ProteomicsDB" id="258821"/>
<dbReference type="Pumba" id="Q8K2L8"/>
<dbReference type="Antibodypedia" id="26298">
    <property type="antibodies" value="69 antibodies from 14 providers"/>
</dbReference>
<dbReference type="Ensembl" id="ENSMUST00000020954.15">
    <property type="protein sequence ID" value="ENSMUSP00000020954.9"/>
    <property type="gene ID" value="ENSMUSG00000020628.17"/>
</dbReference>
<dbReference type="Ensembl" id="ENSMUST00000168129.10">
    <property type="protein sequence ID" value="ENSMUSP00000127752.3"/>
    <property type="gene ID" value="ENSMUSG00000020628.17"/>
</dbReference>
<dbReference type="GeneID" id="217449"/>
<dbReference type="KEGG" id="mmu:217449"/>
<dbReference type="UCSC" id="uc007nfw.2">
    <property type="organism name" value="mouse"/>
</dbReference>
<dbReference type="AGR" id="MGI:2445089"/>
<dbReference type="CTD" id="51112"/>
<dbReference type="MGI" id="MGI:2445089">
    <property type="gene designation" value="Trappc12"/>
</dbReference>
<dbReference type="VEuPathDB" id="HostDB:ENSMUSG00000020628"/>
<dbReference type="eggNOG" id="KOG2796">
    <property type="taxonomic scope" value="Eukaryota"/>
</dbReference>
<dbReference type="GeneTree" id="ENSGT00390000002448"/>
<dbReference type="HOGENOM" id="CLU_014917_0_0_1"/>
<dbReference type="InParanoid" id="Q8K2L8"/>
<dbReference type="OMA" id="MSNITQE"/>
<dbReference type="OrthoDB" id="428342at2759"/>
<dbReference type="PhylomeDB" id="Q8K2L8"/>
<dbReference type="TreeFam" id="TF320881"/>
<dbReference type="Reactome" id="R-MMU-8876198">
    <property type="pathway name" value="RAB GEFs exchange GTP for GDP on RABs"/>
</dbReference>
<dbReference type="BioGRID-ORCS" id="217449">
    <property type="hits" value="2 hits in 76 CRISPR screens"/>
</dbReference>
<dbReference type="ChiTaRS" id="Trappc12">
    <property type="organism name" value="mouse"/>
</dbReference>
<dbReference type="PRO" id="PR:Q8K2L8"/>
<dbReference type="Proteomes" id="UP000000589">
    <property type="component" value="Chromosome 12"/>
</dbReference>
<dbReference type="RNAct" id="Q8K2L8">
    <property type="molecule type" value="protein"/>
</dbReference>
<dbReference type="Bgee" id="ENSMUSG00000020628">
    <property type="expression patterns" value="Expressed in rostral migratory stream and 234 other cell types or tissues"/>
</dbReference>
<dbReference type="ExpressionAtlas" id="Q8K2L8">
    <property type="expression patterns" value="baseline and differential"/>
</dbReference>
<dbReference type="GO" id="GO:0005737">
    <property type="term" value="C:cytoplasm"/>
    <property type="evidence" value="ECO:0000303"/>
    <property type="project" value="ComplexPortal"/>
</dbReference>
<dbReference type="GO" id="GO:0005793">
    <property type="term" value="C:endoplasmic reticulum-Golgi intermediate compartment"/>
    <property type="evidence" value="ECO:0007669"/>
    <property type="project" value="UniProtKB-SubCell"/>
</dbReference>
<dbReference type="GO" id="GO:0000776">
    <property type="term" value="C:kinetochore"/>
    <property type="evidence" value="ECO:0000250"/>
    <property type="project" value="UniProtKB"/>
</dbReference>
<dbReference type="GO" id="GO:0005654">
    <property type="term" value="C:nucleoplasm"/>
    <property type="evidence" value="ECO:0007669"/>
    <property type="project" value="Ensembl"/>
</dbReference>
<dbReference type="GO" id="GO:0005634">
    <property type="term" value="C:nucleus"/>
    <property type="evidence" value="ECO:0000250"/>
    <property type="project" value="UniProtKB"/>
</dbReference>
<dbReference type="GO" id="GO:0048471">
    <property type="term" value="C:perinuclear region of cytoplasm"/>
    <property type="evidence" value="ECO:0007669"/>
    <property type="project" value="Ensembl"/>
</dbReference>
<dbReference type="GO" id="GO:1990072">
    <property type="term" value="C:TRAPPIII protein complex"/>
    <property type="evidence" value="ECO:0000303"/>
    <property type="project" value="ComplexPortal"/>
</dbReference>
<dbReference type="GO" id="GO:0048208">
    <property type="term" value="P:COPII vesicle coating"/>
    <property type="evidence" value="ECO:0000303"/>
    <property type="project" value="ComplexPortal"/>
</dbReference>
<dbReference type="GO" id="GO:0006888">
    <property type="term" value="P:endoplasmic reticulum to Golgi vesicle-mediated transport"/>
    <property type="evidence" value="ECO:0000303"/>
    <property type="project" value="ComplexPortal"/>
</dbReference>
<dbReference type="GO" id="GO:0007030">
    <property type="term" value="P:Golgi organization"/>
    <property type="evidence" value="ECO:0007669"/>
    <property type="project" value="Ensembl"/>
</dbReference>
<dbReference type="GO" id="GO:0051310">
    <property type="term" value="P:metaphase chromosome alignment"/>
    <property type="evidence" value="ECO:0000250"/>
    <property type="project" value="UniProtKB"/>
</dbReference>
<dbReference type="GO" id="GO:1905342">
    <property type="term" value="P:positive regulation of protein localization to kinetochore"/>
    <property type="evidence" value="ECO:0000250"/>
    <property type="project" value="UniProtKB"/>
</dbReference>
<dbReference type="GO" id="GO:0090234">
    <property type="term" value="P:regulation of kinetochore assembly"/>
    <property type="evidence" value="ECO:0000250"/>
    <property type="project" value="UniProtKB"/>
</dbReference>
<dbReference type="GO" id="GO:0099022">
    <property type="term" value="P:vesicle tethering"/>
    <property type="evidence" value="ECO:0000303"/>
    <property type="project" value="ComplexPortal"/>
</dbReference>
<dbReference type="FunFam" id="1.25.40.10:FF:000170">
    <property type="entry name" value="Trafficking protein particle complex subunit 12"/>
    <property type="match status" value="1"/>
</dbReference>
<dbReference type="Gene3D" id="1.25.40.10">
    <property type="entry name" value="Tetratricopeptide repeat domain"/>
    <property type="match status" value="1"/>
</dbReference>
<dbReference type="InterPro" id="IPR011990">
    <property type="entry name" value="TPR-like_helical_dom_sf"/>
</dbReference>
<dbReference type="InterPro" id="IPR019734">
    <property type="entry name" value="TPR_rpt"/>
</dbReference>
<dbReference type="PANTHER" id="PTHR21581">
    <property type="entry name" value="D-ALANYL-D-ALANINE CARBOXYPEPTIDASE"/>
    <property type="match status" value="1"/>
</dbReference>
<dbReference type="PANTHER" id="PTHR21581:SF6">
    <property type="entry name" value="TRAFFICKING PROTEIN PARTICLE COMPLEX SUBUNIT 12"/>
    <property type="match status" value="1"/>
</dbReference>
<dbReference type="Pfam" id="PF14559">
    <property type="entry name" value="TPR_19"/>
    <property type="match status" value="1"/>
</dbReference>
<dbReference type="Pfam" id="PF13174">
    <property type="entry name" value="TPR_6"/>
    <property type="match status" value="1"/>
</dbReference>
<dbReference type="SMART" id="SM00028">
    <property type="entry name" value="TPR"/>
    <property type="match status" value="4"/>
</dbReference>
<dbReference type="SUPFAM" id="SSF48452">
    <property type="entry name" value="TPR-like"/>
    <property type="match status" value="1"/>
</dbReference>
<dbReference type="PROSITE" id="PS50005">
    <property type="entry name" value="TPR"/>
    <property type="match status" value="4"/>
</dbReference>
<dbReference type="PROSITE" id="PS50293">
    <property type="entry name" value="TPR_REGION"/>
    <property type="match status" value="1"/>
</dbReference>